<gene>
    <name type="ordered locus">MW0434</name>
</gene>
<evidence type="ECO:0000255" key="1">
    <source>
        <dbReference type="HAMAP-Rule" id="MF_00274"/>
    </source>
</evidence>
<evidence type="ECO:0000256" key="2">
    <source>
        <dbReference type="SAM" id="MobiDB-lite"/>
    </source>
</evidence>
<keyword id="KW-0963">Cytoplasm</keyword>
<keyword id="KW-0238">DNA-binding</keyword>
<reference key="1">
    <citation type="journal article" date="2002" name="Lancet">
        <title>Genome and virulence determinants of high virulence community-acquired MRSA.</title>
        <authorList>
            <person name="Baba T."/>
            <person name="Takeuchi F."/>
            <person name="Kuroda M."/>
            <person name="Yuzawa H."/>
            <person name="Aoki K."/>
            <person name="Oguchi A."/>
            <person name="Nagai Y."/>
            <person name="Iwama N."/>
            <person name="Asano K."/>
            <person name="Naimi T."/>
            <person name="Kuroda H."/>
            <person name="Cui L."/>
            <person name="Yamamoto K."/>
            <person name="Hiramatsu K."/>
        </authorList>
    </citation>
    <scope>NUCLEOTIDE SEQUENCE [LARGE SCALE GENOMIC DNA]</scope>
    <source>
        <strain>MW2</strain>
    </source>
</reference>
<comment type="function">
    <text evidence="1">Binds to DNA and alters its conformation. May be involved in regulation of gene expression, nucleoid organization and DNA protection.</text>
</comment>
<comment type="subunit">
    <text evidence="1">Homodimer.</text>
</comment>
<comment type="subcellular location">
    <subcellularLocation>
        <location evidence="1">Cytoplasm</location>
        <location evidence="1">Nucleoid</location>
    </subcellularLocation>
</comment>
<comment type="similarity">
    <text evidence="1">Belongs to the YbaB/EbfC family.</text>
</comment>
<proteinExistence type="inferred from homology"/>
<organism>
    <name type="scientific">Staphylococcus aureus (strain MW2)</name>
    <dbReference type="NCBI Taxonomy" id="196620"/>
    <lineage>
        <taxon>Bacteria</taxon>
        <taxon>Bacillati</taxon>
        <taxon>Bacillota</taxon>
        <taxon>Bacilli</taxon>
        <taxon>Bacillales</taxon>
        <taxon>Staphylococcaceae</taxon>
        <taxon>Staphylococcus</taxon>
    </lineage>
</organism>
<protein>
    <recommendedName>
        <fullName evidence="1">Nucleoid-associated protein MW0434</fullName>
    </recommendedName>
</protein>
<name>Y434_STAAW</name>
<accession>P67263</accession>
<accession>Q99WC4</accession>
<dbReference type="EMBL" id="BA000033">
    <property type="protein sequence ID" value="BAB94299.1"/>
    <property type="molecule type" value="Genomic_DNA"/>
</dbReference>
<dbReference type="RefSeq" id="WP_001213992.1">
    <property type="nucleotide sequence ID" value="NC_003923.1"/>
</dbReference>
<dbReference type="SMR" id="P67263"/>
<dbReference type="KEGG" id="sam:MW0434"/>
<dbReference type="HOGENOM" id="CLU_140930_1_0_9"/>
<dbReference type="GO" id="GO:0043590">
    <property type="term" value="C:bacterial nucleoid"/>
    <property type="evidence" value="ECO:0007669"/>
    <property type="project" value="UniProtKB-UniRule"/>
</dbReference>
<dbReference type="GO" id="GO:0005829">
    <property type="term" value="C:cytosol"/>
    <property type="evidence" value="ECO:0007669"/>
    <property type="project" value="TreeGrafter"/>
</dbReference>
<dbReference type="GO" id="GO:0003677">
    <property type="term" value="F:DNA binding"/>
    <property type="evidence" value="ECO:0007669"/>
    <property type="project" value="UniProtKB-UniRule"/>
</dbReference>
<dbReference type="FunFam" id="3.30.1310.10:FF:000002">
    <property type="entry name" value="Nucleoid-associated protein IKC_06587"/>
    <property type="match status" value="1"/>
</dbReference>
<dbReference type="Gene3D" id="3.30.1310.10">
    <property type="entry name" value="Nucleoid-associated protein YbaB-like domain"/>
    <property type="match status" value="1"/>
</dbReference>
<dbReference type="HAMAP" id="MF_00274">
    <property type="entry name" value="DNA_YbaB_EbfC"/>
    <property type="match status" value="1"/>
</dbReference>
<dbReference type="InterPro" id="IPR036894">
    <property type="entry name" value="YbaB-like_sf"/>
</dbReference>
<dbReference type="InterPro" id="IPR004401">
    <property type="entry name" value="YbaB/EbfC"/>
</dbReference>
<dbReference type="NCBIfam" id="TIGR00103">
    <property type="entry name" value="DNA_YbaB_EbfC"/>
    <property type="match status" value="1"/>
</dbReference>
<dbReference type="PANTHER" id="PTHR33449">
    <property type="entry name" value="NUCLEOID-ASSOCIATED PROTEIN YBAB"/>
    <property type="match status" value="1"/>
</dbReference>
<dbReference type="PANTHER" id="PTHR33449:SF1">
    <property type="entry name" value="NUCLEOID-ASSOCIATED PROTEIN YBAB"/>
    <property type="match status" value="1"/>
</dbReference>
<dbReference type="Pfam" id="PF02575">
    <property type="entry name" value="YbaB_DNA_bd"/>
    <property type="match status" value="1"/>
</dbReference>
<dbReference type="PIRSF" id="PIRSF004555">
    <property type="entry name" value="UCP004555"/>
    <property type="match status" value="1"/>
</dbReference>
<dbReference type="SUPFAM" id="SSF82607">
    <property type="entry name" value="YbaB-like"/>
    <property type="match status" value="1"/>
</dbReference>
<feature type="chain" id="PRO_0000170440" description="Nucleoid-associated protein MW0434">
    <location>
        <begin position="1"/>
        <end position="105"/>
    </location>
</feature>
<feature type="region of interest" description="Disordered" evidence="2">
    <location>
        <begin position="1"/>
        <end position="33"/>
    </location>
</feature>
<feature type="compositionally biased region" description="Low complexity" evidence="2">
    <location>
        <begin position="7"/>
        <end position="16"/>
    </location>
</feature>
<feature type="compositionally biased region" description="Basic and acidic residues" evidence="2">
    <location>
        <begin position="21"/>
        <end position="33"/>
    </location>
</feature>
<sequence>MRGGGNMQQMMKQMQKMQKKMAQEQEKLKEERIVGTAGGGMVAVTVTGHKEVVDVEIKEEAVDPDDIEMLQDLVLAATNEAMNKADELTQERLGKHTQGLNIPGM</sequence>